<reference key="1">
    <citation type="submission" date="2007-09" db="EMBL/GenBank/DDBJ databases">
        <title>Complete sequence of chromosome of Serratia proteamaculans 568.</title>
        <authorList>
            <consortium name="US DOE Joint Genome Institute"/>
            <person name="Copeland A."/>
            <person name="Lucas S."/>
            <person name="Lapidus A."/>
            <person name="Barry K."/>
            <person name="Glavina del Rio T."/>
            <person name="Dalin E."/>
            <person name="Tice H."/>
            <person name="Pitluck S."/>
            <person name="Chain P."/>
            <person name="Malfatti S."/>
            <person name="Shin M."/>
            <person name="Vergez L."/>
            <person name="Schmutz J."/>
            <person name="Larimer F."/>
            <person name="Land M."/>
            <person name="Hauser L."/>
            <person name="Kyrpides N."/>
            <person name="Kim E."/>
            <person name="Taghavi S."/>
            <person name="Newman L."/>
            <person name="Vangronsveld J."/>
            <person name="van der Lelie D."/>
            <person name="Richardson P."/>
        </authorList>
    </citation>
    <scope>NUCLEOTIDE SEQUENCE [LARGE SCALE GENOMIC DNA]</scope>
    <source>
        <strain>568</strain>
    </source>
</reference>
<accession>A8GFF7</accession>
<keyword id="KW-0274">FAD</keyword>
<keyword id="KW-0285">Flavoprotein</keyword>
<keyword id="KW-0560">Oxidoreductase</keyword>
<protein>
    <recommendedName>
        <fullName evidence="1">D-amino acid dehydrogenase</fullName>
        <ecNumber evidence="1">1.4.99.-</ecNumber>
    </recommendedName>
</protein>
<comment type="function">
    <text evidence="1">Oxidative deamination of D-amino acids.</text>
</comment>
<comment type="catalytic activity">
    <reaction evidence="1">
        <text>a D-alpha-amino acid + A + H2O = a 2-oxocarboxylate + AH2 + NH4(+)</text>
        <dbReference type="Rhea" id="RHEA:18125"/>
        <dbReference type="ChEBI" id="CHEBI:13193"/>
        <dbReference type="ChEBI" id="CHEBI:15377"/>
        <dbReference type="ChEBI" id="CHEBI:17499"/>
        <dbReference type="ChEBI" id="CHEBI:28938"/>
        <dbReference type="ChEBI" id="CHEBI:35179"/>
        <dbReference type="ChEBI" id="CHEBI:59871"/>
    </reaction>
</comment>
<comment type="cofactor">
    <cofactor evidence="1">
        <name>FAD</name>
        <dbReference type="ChEBI" id="CHEBI:57692"/>
    </cofactor>
</comment>
<comment type="pathway">
    <text>Amino-acid degradation; D-alanine degradation; NH(3) and pyruvate from D-alanine: step 1/1.</text>
</comment>
<comment type="similarity">
    <text evidence="1">Belongs to the DadA oxidoreductase family.</text>
</comment>
<sequence>MRVVILGSGVVGVASAWYLAKAGHEVTVIDRQPGPAMETSAANAGQISPGYAAPWAAPGVPLKAVKWMFQRHAPLAVRLDGSSFQLSWMWQMLKNCNTEHYMTNKGRMVRLAEYSRDCIKALRQETGIQYEGRQGGTLQLFRTQQQFESAAKDIAVLEDAGVPYKLLEASQLASVEPALAQVAHKLTGGLQLPNDETGDCQLFTQQLAKLAQQAGVTFLYNRSVDRLLVEGDKISGVQCGGEIFKADSYVVAFGSYSTALLRDLVSIPVYPLKGYSLTIPITDESAAPFSTVLDETYKIAITRFDQRIRVGGMAEIVGFNTQLEQKRRETLEMVVRDLYPNGGRVEDATFWTGLRPMTPDGTPIVGKTSLKNLFLNTGHGTLGWTMACGSGQLLSDLISGITPAIPSDDLGVARYSAGFRSLYTGPLNDVHPAR</sequence>
<gene>
    <name evidence="1" type="primary">dadA</name>
    <name type="ordered locus">Spro_2746</name>
</gene>
<organism>
    <name type="scientific">Serratia proteamaculans (strain 568)</name>
    <dbReference type="NCBI Taxonomy" id="399741"/>
    <lineage>
        <taxon>Bacteria</taxon>
        <taxon>Pseudomonadati</taxon>
        <taxon>Pseudomonadota</taxon>
        <taxon>Gammaproteobacteria</taxon>
        <taxon>Enterobacterales</taxon>
        <taxon>Yersiniaceae</taxon>
        <taxon>Serratia</taxon>
    </lineage>
</organism>
<dbReference type="EC" id="1.4.99.-" evidence="1"/>
<dbReference type="EMBL" id="CP000826">
    <property type="protein sequence ID" value="ABV41847.1"/>
    <property type="molecule type" value="Genomic_DNA"/>
</dbReference>
<dbReference type="SMR" id="A8GFF7"/>
<dbReference type="STRING" id="399741.Spro_2746"/>
<dbReference type="KEGG" id="spe:Spro_2746"/>
<dbReference type="eggNOG" id="COG0665">
    <property type="taxonomic scope" value="Bacteria"/>
</dbReference>
<dbReference type="HOGENOM" id="CLU_007884_9_2_6"/>
<dbReference type="OrthoDB" id="9805337at2"/>
<dbReference type="UniPathway" id="UPA00043">
    <property type="reaction ID" value="UER00498"/>
</dbReference>
<dbReference type="GO" id="GO:0005737">
    <property type="term" value="C:cytoplasm"/>
    <property type="evidence" value="ECO:0007669"/>
    <property type="project" value="TreeGrafter"/>
</dbReference>
<dbReference type="GO" id="GO:0005886">
    <property type="term" value="C:plasma membrane"/>
    <property type="evidence" value="ECO:0007669"/>
    <property type="project" value="TreeGrafter"/>
</dbReference>
<dbReference type="GO" id="GO:0008718">
    <property type="term" value="F:D-amino-acid dehydrogenase activity"/>
    <property type="evidence" value="ECO:0007669"/>
    <property type="project" value="UniProtKB-UniRule"/>
</dbReference>
<dbReference type="GO" id="GO:0055130">
    <property type="term" value="P:D-alanine catabolic process"/>
    <property type="evidence" value="ECO:0007669"/>
    <property type="project" value="UniProtKB-UniPathway"/>
</dbReference>
<dbReference type="FunFam" id="3.50.50.60:FF:000020">
    <property type="entry name" value="D-amino acid dehydrogenase"/>
    <property type="match status" value="1"/>
</dbReference>
<dbReference type="Gene3D" id="3.30.9.10">
    <property type="entry name" value="D-Amino Acid Oxidase, subunit A, domain 2"/>
    <property type="match status" value="1"/>
</dbReference>
<dbReference type="Gene3D" id="3.50.50.60">
    <property type="entry name" value="FAD/NAD(P)-binding domain"/>
    <property type="match status" value="2"/>
</dbReference>
<dbReference type="HAMAP" id="MF_01202">
    <property type="entry name" value="DadA"/>
    <property type="match status" value="1"/>
</dbReference>
<dbReference type="InterPro" id="IPR023080">
    <property type="entry name" value="DadA"/>
</dbReference>
<dbReference type="InterPro" id="IPR006076">
    <property type="entry name" value="FAD-dep_OxRdtase"/>
</dbReference>
<dbReference type="InterPro" id="IPR036188">
    <property type="entry name" value="FAD/NAD-bd_sf"/>
</dbReference>
<dbReference type="NCBIfam" id="NF001933">
    <property type="entry name" value="PRK00711.1"/>
    <property type="match status" value="1"/>
</dbReference>
<dbReference type="PANTHER" id="PTHR13847:SF280">
    <property type="entry name" value="D-AMINO ACID DEHYDROGENASE"/>
    <property type="match status" value="1"/>
</dbReference>
<dbReference type="PANTHER" id="PTHR13847">
    <property type="entry name" value="SARCOSINE DEHYDROGENASE-RELATED"/>
    <property type="match status" value="1"/>
</dbReference>
<dbReference type="Pfam" id="PF01266">
    <property type="entry name" value="DAO"/>
    <property type="match status" value="1"/>
</dbReference>
<dbReference type="SUPFAM" id="SSF54373">
    <property type="entry name" value="FAD-linked reductases, C-terminal domain"/>
    <property type="match status" value="1"/>
</dbReference>
<dbReference type="SUPFAM" id="SSF51905">
    <property type="entry name" value="FAD/NAD(P)-binding domain"/>
    <property type="match status" value="1"/>
</dbReference>
<proteinExistence type="inferred from homology"/>
<evidence type="ECO:0000255" key="1">
    <source>
        <dbReference type="HAMAP-Rule" id="MF_01202"/>
    </source>
</evidence>
<feature type="chain" id="PRO_1000066115" description="D-amino acid dehydrogenase">
    <location>
        <begin position="1"/>
        <end position="434"/>
    </location>
</feature>
<feature type="binding site" evidence="1">
    <location>
        <begin position="3"/>
        <end position="17"/>
    </location>
    <ligand>
        <name>FAD</name>
        <dbReference type="ChEBI" id="CHEBI:57692"/>
    </ligand>
</feature>
<name>DADA_SERP5</name>